<keyword id="KW-0002">3D-structure</keyword>
<keyword id="KW-0025">Alternative splicing</keyword>
<keyword id="KW-0156">Chromatin regulator</keyword>
<keyword id="KW-0175">Coiled coil</keyword>
<keyword id="KW-0225">Disease variant</keyword>
<keyword id="KW-0227">DNA damage</keyword>
<keyword id="KW-0234">DNA repair</keyword>
<keyword id="KW-0539">Nucleus</keyword>
<keyword id="KW-0597">Phosphoprotein</keyword>
<keyword id="KW-1267">Proteomics identification</keyword>
<keyword id="KW-1185">Reference proteome</keyword>
<comment type="function">
    <text evidence="7 8 9 10 13 15 19">Involved in DNA damage response and double-strand break (DSB) repair. Component of the BRCA1-A complex, acting as a central scaffold protein that assembles the various components of the complex and mediates the recruitment of BRCA1. The BRCA1-A complex specifically recognizes 'Lys-63'-linked ubiquitinated histones H2A and H2AX at DNA lesion sites, leading to target the BRCA1-BARD1 heterodimer to sites of DNA damage at DSBs. This complex also possesses deubiquitinase activity that specifically removes 'Lys-63'-linked ubiquitin on histones H2A and H2AX.</text>
</comment>
<comment type="subunit">
    <text evidence="7 8 9 12 13 14 16 17 19">Component of the ARISC complex, at least composed of UIMC1/RAP80, ABRAXAS1, BRCC3/BRCC36, BABAM2 and BABAM1/NBA1 (PubMed:24075985). Component of the BRCA1-A complex, at least composed of BRCA1, BARD1, UIMC1/RAP80, ABRAXAS1, BRCC3/BRCC36, BABAM2 and BABAM1/NBA1. In the complex, interacts directly with UIMC1/RAP80, BRCC3/BRCC36 and BABAM2. Interacts directly (when phosphorylated at Ser-406) with BRCA1. Homodimer. The homodimer interacts directly (when phosphorylated at Ser-404 and Ser-406) with two BRCA1 chains, giving rise to a heterotetramer. Binds polyubiquitin.</text>
</comment>
<comment type="interaction">
    <interactant intactId="EBI-1263451">
        <id>Q6UWZ7</id>
    </interactant>
    <interactant intactId="EBI-349905">
        <id>P38398</id>
        <label>BRCA1</label>
    </interactant>
    <organismsDiffer>false</organismsDiffer>
    <experiments>16</experiments>
</comment>
<comment type="interaction">
    <interactant intactId="EBI-1263451">
        <id>Q6UWZ7</id>
    </interactant>
    <interactant intactId="EBI-750352">
        <id>P46736</id>
        <label>BRCC3</label>
    </interactant>
    <organismsDiffer>false</organismsDiffer>
    <experiments>4</experiments>
</comment>
<comment type="interaction">
    <interactant intactId="EBI-1263451">
        <id>Q6UWZ7</id>
    </interactant>
    <interactant intactId="EBI-349854">
        <id>P13569</id>
        <label>CFTR</label>
    </interactant>
    <organismsDiffer>false</organismsDiffer>
    <experiments>3</experiments>
</comment>
<comment type="interaction">
    <interactant intactId="EBI-1263451">
        <id>Q6UWZ7</id>
    </interactant>
    <interactant intactId="EBI-396343">
        <id>O00629</id>
        <label>KPNA4</label>
    </interactant>
    <organismsDiffer>false</organismsDiffer>
    <experiments>2</experiments>
</comment>
<comment type="interaction">
    <interactant intactId="EBI-1263451">
        <id>Q6UWZ7</id>
    </interactant>
    <interactant intactId="EBI-725300">
        <id>Q96RL1</id>
        <label>UIMC1</label>
    </interactant>
    <organismsDiffer>false</organismsDiffer>
    <experiments>9</experiments>
</comment>
<comment type="interaction">
    <interactant intactId="EBI-1263451">
        <id>Q6UWZ7</id>
    </interactant>
    <interactant intactId="EBI-9640371">
        <id>Q96RL1-1</id>
        <label>UIMC1</label>
    </interactant>
    <organismsDiffer>false</organismsDiffer>
    <experiments>4</experiments>
</comment>
<comment type="subcellular location">
    <subcellularLocation>
        <location evidence="7 8 9">Nucleus</location>
    </subcellularLocation>
    <text evidence="20">Localizes at sites of DNA damage at double-strand breaks (DSBs).</text>
</comment>
<comment type="alternative products">
    <event type="alternative splicing"/>
    <isoform>
        <id>Q6UWZ7-1</id>
        <name>1</name>
        <sequence type="displayed"/>
    </isoform>
    <isoform>
        <id>Q6UWZ7-2</id>
        <name>2</name>
        <sequence type="described" ref="VSP_058196"/>
    </isoform>
</comment>
<comment type="PTM">
    <text evidence="7 8 9 19">Phosphorylation of Ser-406 of the pSXXF motif by ATM or ATR constitutes a specific recognition motif for the BRCT domain of BRCA1 (PubMed:17525340, PubMed:17643121, PubMed:17643122). Ionizing radiation promotes rapid phosphorylation at Ser-404 and Ser-406 by ATM; this promotes recruitment of BRCA1 to sites of DNA damage (PubMed:26778126).</text>
</comment>
<comment type="disease" evidence="15 18">
    <disease id="DI-02602">
        <name>Breast cancer</name>
        <acronym>BC</acronym>
        <description>A common malignancy originating from breast epithelial tissue. Breast neoplasms can be distinguished by their histologic pattern. Invasive ductal carcinoma is by far the most common type. Breast cancer is etiologically and genetically heterogeneous. Important genetic factors have been indicated by familial occurrence and bilateral involvement. Mutations at more than one locus can be involved in different families or even in the same case.</description>
        <dbReference type="MIM" id="114480"/>
    </disease>
    <text>Disease susceptibility is associated with variants affecting the gene represented in this entry.</text>
</comment>
<comment type="similarity">
    <text evidence="20">Belongs to the FAM175 family. Abraxas subfamily.</text>
</comment>
<comment type="sequence caution" evidence="20">
    <conflict type="erroneous initiation">
        <sequence resource="EMBL-CDS" id="AAH39573"/>
    </conflict>
    <text>Truncated N-terminus.</text>
</comment>
<dbReference type="EMBL" id="AY358576">
    <property type="protein sequence ID" value="AAQ88939.1"/>
    <property type="molecule type" value="mRNA"/>
</dbReference>
<dbReference type="EMBL" id="EF531340">
    <property type="protein sequence ID" value="ABP87396.1"/>
    <property type="molecule type" value="mRNA"/>
</dbReference>
<dbReference type="EMBL" id="CH471057">
    <property type="protein sequence ID" value="EAX05942.1"/>
    <property type="molecule type" value="Genomic_DNA"/>
</dbReference>
<dbReference type="EMBL" id="BC039573">
    <property type="protein sequence ID" value="AAH39573.1"/>
    <property type="status" value="ALT_INIT"/>
    <property type="molecule type" value="mRNA"/>
</dbReference>
<dbReference type="EMBL" id="AK022704">
    <property type="protein sequence ID" value="BAB14189.1"/>
    <property type="molecule type" value="mRNA"/>
</dbReference>
<dbReference type="EMBL" id="AK023676">
    <property type="protein sequence ID" value="BAB14635.1"/>
    <property type="molecule type" value="mRNA"/>
</dbReference>
<dbReference type="CCDS" id="CCDS3605.2">
    <molecule id="Q6UWZ7-1"/>
</dbReference>
<dbReference type="RefSeq" id="NP_001332891.1">
    <molecule id="Q6UWZ7-2"/>
    <property type="nucleotide sequence ID" value="NM_001345962.2"/>
</dbReference>
<dbReference type="RefSeq" id="NP_620775.2">
    <molecule id="Q6UWZ7-1"/>
    <property type="nucleotide sequence ID" value="NM_139076.3"/>
</dbReference>
<dbReference type="PDB" id="4JLU">
    <property type="method" value="X-ray"/>
    <property type="resolution" value="3.50 A"/>
    <property type="chains" value="B=399-409"/>
</dbReference>
<dbReference type="PDB" id="4U4A">
    <property type="method" value="X-ray"/>
    <property type="resolution" value="3.51 A"/>
    <property type="chains" value="D/E/F=399-409"/>
</dbReference>
<dbReference type="PDB" id="4Y18">
    <property type="method" value="X-ray"/>
    <property type="resolution" value="3.50 A"/>
    <property type="chains" value="I/J/K/L/M/N/O/P=399-409"/>
</dbReference>
<dbReference type="PDB" id="4Y2G">
    <property type="method" value="X-ray"/>
    <property type="resolution" value="2.50 A"/>
    <property type="chains" value="B=403-409"/>
</dbReference>
<dbReference type="PDBsum" id="4JLU"/>
<dbReference type="PDBsum" id="4U4A"/>
<dbReference type="PDBsum" id="4Y18"/>
<dbReference type="PDBsum" id="4Y2G"/>
<dbReference type="SMR" id="Q6UWZ7"/>
<dbReference type="BioGRID" id="123911">
    <property type="interactions" value="42"/>
</dbReference>
<dbReference type="ComplexPortal" id="CPX-4425">
    <property type="entry name" value="BRCA1-A complex"/>
</dbReference>
<dbReference type="CORUM" id="Q6UWZ7"/>
<dbReference type="DIP" id="DIP-29615N"/>
<dbReference type="ELM" id="Q6UWZ7"/>
<dbReference type="FunCoup" id="Q6UWZ7">
    <property type="interactions" value="2756"/>
</dbReference>
<dbReference type="IntAct" id="Q6UWZ7">
    <property type="interactions" value="19"/>
</dbReference>
<dbReference type="MINT" id="Q6UWZ7"/>
<dbReference type="STRING" id="9606.ENSP00000369857"/>
<dbReference type="GlyGen" id="Q6UWZ7">
    <property type="glycosylation" value="1 site, 1 O-linked glycan (1 site)"/>
</dbReference>
<dbReference type="iPTMnet" id="Q6UWZ7"/>
<dbReference type="PhosphoSitePlus" id="Q6UWZ7"/>
<dbReference type="BioMuta" id="ABRAXAS1"/>
<dbReference type="DMDM" id="126215684"/>
<dbReference type="jPOST" id="Q6UWZ7"/>
<dbReference type="MassIVE" id="Q6UWZ7"/>
<dbReference type="PaxDb" id="9606-ENSP00000369857"/>
<dbReference type="PeptideAtlas" id="Q6UWZ7"/>
<dbReference type="ProteomicsDB" id="67539"/>
<dbReference type="Pumba" id="Q6UWZ7"/>
<dbReference type="Antibodypedia" id="25225">
    <property type="antibodies" value="195 antibodies from 33 providers"/>
</dbReference>
<dbReference type="DNASU" id="84142"/>
<dbReference type="Ensembl" id="ENST00000321945.12">
    <molecule id="Q6UWZ7-1"/>
    <property type="protein sequence ID" value="ENSP00000369857.3"/>
    <property type="gene ID" value="ENSG00000163322.14"/>
</dbReference>
<dbReference type="GeneID" id="84142"/>
<dbReference type="KEGG" id="hsa:84142"/>
<dbReference type="MANE-Select" id="ENST00000321945.12">
    <property type="protein sequence ID" value="ENSP00000369857.3"/>
    <property type="RefSeq nucleotide sequence ID" value="NM_139076.3"/>
    <property type="RefSeq protein sequence ID" value="NP_620775.2"/>
</dbReference>
<dbReference type="UCSC" id="uc003hou.3">
    <molecule id="Q6UWZ7-1"/>
    <property type="organism name" value="human"/>
</dbReference>
<dbReference type="AGR" id="HGNC:25829"/>
<dbReference type="CTD" id="84142"/>
<dbReference type="DisGeNET" id="84142"/>
<dbReference type="GeneCards" id="ABRAXAS1"/>
<dbReference type="HGNC" id="HGNC:25829">
    <property type="gene designation" value="ABRAXAS1"/>
</dbReference>
<dbReference type="HPA" id="ENSG00000163322">
    <property type="expression patterns" value="Low tissue specificity"/>
</dbReference>
<dbReference type="MalaCards" id="ABRAXAS1"/>
<dbReference type="MIM" id="114480">
    <property type="type" value="phenotype"/>
</dbReference>
<dbReference type="MIM" id="611143">
    <property type="type" value="gene"/>
</dbReference>
<dbReference type="neXtProt" id="NX_Q6UWZ7"/>
<dbReference type="OpenTargets" id="ENSG00000163322"/>
<dbReference type="PharmGKB" id="PA162387308"/>
<dbReference type="VEuPathDB" id="HostDB:ENSG00000163322"/>
<dbReference type="eggNOG" id="ENOG502QVCD">
    <property type="taxonomic scope" value="Eukaryota"/>
</dbReference>
<dbReference type="GeneTree" id="ENSGT00530000063424"/>
<dbReference type="HOGENOM" id="CLU_056671_0_1_1"/>
<dbReference type="InParanoid" id="Q6UWZ7"/>
<dbReference type="OrthoDB" id="6358435at2759"/>
<dbReference type="PAN-GO" id="Q6UWZ7">
    <property type="GO annotations" value="6 GO annotations based on evolutionary models"/>
</dbReference>
<dbReference type="PhylomeDB" id="Q6UWZ7"/>
<dbReference type="TreeFam" id="TF331751"/>
<dbReference type="PathwayCommons" id="Q6UWZ7"/>
<dbReference type="Reactome" id="R-HSA-5689901">
    <property type="pathway name" value="Metalloprotease DUBs"/>
</dbReference>
<dbReference type="Reactome" id="R-HSA-5693565">
    <property type="pathway name" value="Recruitment and ATM-mediated phosphorylation of repair and signaling proteins at DNA double strand breaks"/>
</dbReference>
<dbReference type="Reactome" id="R-HSA-5693571">
    <property type="pathway name" value="Nonhomologous End-Joining (NHEJ)"/>
</dbReference>
<dbReference type="Reactome" id="R-HSA-5693607">
    <property type="pathway name" value="Processing of DNA double-strand break ends"/>
</dbReference>
<dbReference type="Reactome" id="R-HSA-69473">
    <property type="pathway name" value="G2/M DNA damage checkpoint"/>
</dbReference>
<dbReference type="SignaLink" id="Q6UWZ7"/>
<dbReference type="SIGNOR" id="Q6UWZ7"/>
<dbReference type="BioGRID-ORCS" id="84142">
    <property type="hits" value="56 hits in 1167 CRISPR screens"/>
</dbReference>
<dbReference type="ChiTaRS" id="FAM175A">
    <property type="organism name" value="human"/>
</dbReference>
<dbReference type="EvolutionaryTrace" id="Q6UWZ7"/>
<dbReference type="GenomeRNAi" id="84142"/>
<dbReference type="Pharos" id="Q6UWZ7">
    <property type="development level" value="Tbio"/>
</dbReference>
<dbReference type="PRO" id="PR:Q6UWZ7"/>
<dbReference type="Proteomes" id="UP000005640">
    <property type="component" value="Chromosome 4"/>
</dbReference>
<dbReference type="RNAct" id="Q6UWZ7">
    <property type="molecule type" value="protein"/>
</dbReference>
<dbReference type="Bgee" id="ENSG00000163322">
    <property type="expression patterns" value="Expressed in primordial germ cell in gonad and 185 other cell types or tissues"/>
</dbReference>
<dbReference type="ExpressionAtlas" id="Q6UWZ7">
    <property type="expression patterns" value="baseline and differential"/>
</dbReference>
<dbReference type="GO" id="GO:0070531">
    <property type="term" value="C:BRCA1-A complex"/>
    <property type="evidence" value="ECO:0000314"/>
    <property type="project" value="UniProtKB"/>
</dbReference>
<dbReference type="GO" id="GO:0016604">
    <property type="term" value="C:nuclear body"/>
    <property type="evidence" value="ECO:0000314"/>
    <property type="project" value="HPA"/>
</dbReference>
<dbReference type="GO" id="GO:0005654">
    <property type="term" value="C:nucleoplasm"/>
    <property type="evidence" value="ECO:0000304"/>
    <property type="project" value="Reactome"/>
</dbReference>
<dbReference type="GO" id="GO:0005634">
    <property type="term" value="C:nucleus"/>
    <property type="evidence" value="ECO:0000314"/>
    <property type="project" value="UniProtKB"/>
</dbReference>
<dbReference type="GO" id="GO:0008017">
    <property type="term" value="F:microtubule binding"/>
    <property type="evidence" value="ECO:0000318"/>
    <property type="project" value="GO_Central"/>
</dbReference>
<dbReference type="GO" id="GO:0031593">
    <property type="term" value="F:polyubiquitin modification-dependent protein binding"/>
    <property type="evidence" value="ECO:0000314"/>
    <property type="project" value="UniProtKB"/>
</dbReference>
<dbReference type="GO" id="GO:0008608">
    <property type="term" value="P:attachment of spindle microtubules to kinetochore"/>
    <property type="evidence" value="ECO:0000318"/>
    <property type="project" value="GO_Central"/>
</dbReference>
<dbReference type="GO" id="GO:0006325">
    <property type="term" value="P:chromatin organization"/>
    <property type="evidence" value="ECO:0007669"/>
    <property type="project" value="UniProtKB-KW"/>
</dbReference>
<dbReference type="GO" id="GO:0006302">
    <property type="term" value="P:double-strand break repair"/>
    <property type="evidence" value="ECO:0000315"/>
    <property type="project" value="UniProtKB"/>
</dbReference>
<dbReference type="GO" id="GO:0007095">
    <property type="term" value="P:mitotic G2 DNA damage checkpoint signaling"/>
    <property type="evidence" value="ECO:0000315"/>
    <property type="project" value="UniProtKB"/>
</dbReference>
<dbReference type="GO" id="GO:0044818">
    <property type="term" value="P:mitotic G2/M transition checkpoint"/>
    <property type="evidence" value="ECO:0000303"/>
    <property type="project" value="ComplexPortal"/>
</dbReference>
<dbReference type="GO" id="GO:0090307">
    <property type="term" value="P:mitotic spindle assembly"/>
    <property type="evidence" value="ECO:0000318"/>
    <property type="project" value="GO_Central"/>
</dbReference>
<dbReference type="GO" id="GO:0045739">
    <property type="term" value="P:positive regulation of DNA repair"/>
    <property type="evidence" value="ECO:0000315"/>
    <property type="project" value="UniProtKB"/>
</dbReference>
<dbReference type="GO" id="GO:0006282">
    <property type="term" value="P:regulation of DNA repair"/>
    <property type="evidence" value="ECO:0000303"/>
    <property type="project" value="ComplexPortal"/>
</dbReference>
<dbReference type="GO" id="GO:0010212">
    <property type="term" value="P:response to ionizing radiation"/>
    <property type="evidence" value="ECO:0000315"/>
    <property type="project" value="UniProtKB"/>
</dbReference>
<dbReference type="CDD" id="cd23523">
    <property type="entry name" value="Abraxas_1"/>
    <property type="match status" value="1"/>
</dbReference>
<dbReference type="InterPro" id="IPR023239">
    <property type="entry name" value="BRISC_Abraxas1"/>
</dbReference>
<dbReference type="InterPro" id="IPR023238">
    <property type="entry name" value="FAM175"/>
</dbReference>
<dbReference type="InterPro" id="IPR037518">
    <property type="entry name" value="MPN"/>
</dbReference>
<dbReference type="PANTHER" id="PTHR31728">
    <property type="entry name" value="ABRAXAS FAMILY MEMBER"/>
    <property type="match status" value="1"/>
</dbReference>
<dbReference type="PANTHER" id="PTHR31728:SF2">
    <property type="entry name" value="BRCA1-A COMPLEX SUBUNIT ABRAXAS 1"/>
    <property type="match status" value="1"/>
</dbReference>
<dbReference type="Pfam" id="PF21125">
    <property type="entry name" value="MPN_2A_DUB_like"/>
    <property type="match status" value="1"/>
</dbReference>
<dbReference type="PRINTS" id="PR02052">
    <property type="entry name" value="ABRAXAS"/>
</dbReference>
<dbReference type="PRINTS" id="PR02051">
    <property type="entry name" value="PROTEINF175"/>
</dbReference>
<dbReference type="PROSITE" id="PS50249">
    <property type="entry name" value="MPN"/>
    <property type="match status" value="1"/>
</dbReference>
<feature type="chain" id="PRO_0000278575" description="BRCA1-A complex subunit Abraxas 1">
    <location>
        <begin position="1"/>
        <end position="409"/>
    </location>
</feature>
<feature type="domain" description="MPN" evidence="3">
    <location>
        <begin position="7"/>
        <end position="160"/>
    </location>
</feature>
<feature type="region of interest" description="Disordered" evidence="4">
    <location>
        <begin position="362"/>
        <end position="409"/>
    </location>
</feature>
<feature type="coiled-coil region" evidence="2">
    <location>
        <begin position="206"/>
        <end position="260"/>
    </location>
</feature>
<feature type="short sequence motif" description="pSXXF motif" evidence="20">
    <location>
        <begin position="406"/>
        <end position="409"/>
    </location>
</feature>
<feature type="compositionally biased region" description="Basic and acidic residues" evidence="4">
    <location>
        <begin position="362"/>
        <end position="372"/>
    </location>
</feature>
<feature type="compositionally biased region" description="Polar residues" evidence="4">
    <location>
        <begin position="373"/>
        <end position="388"/>
    </location>
</feature>
<feature type="modified residue" description="Phosphoserine" evidence="1">
    <location>
        <position position="48"/>
    </location>
</feature>
<feature type="modified residue" description="Phosphoserine" evidence="22 24 25">
    <location>
        <position position="386"/>
    </location>
</feature>
<feature type="modified residue" description="Phosphoserine" evidence="22 24 25">
    <location>
        <position position="387"/>
    </location>
</feature>
<feature type="modified residue" description="Phosphothreonine" evidence="22 23 24 25 26">
    <location>
        <position position="390"/>
    </location>
</feature>
<feature type="modified residue" description="Phosphoserine" evidence="19">
    <location>
        <position position="404"/>
    </location>
</feature>
<feature type="modified residue" description="Phosphoserine" evidence="7 8 9 19 22 23 24 26">
    <location>
        <position position="406"/>
    </location>
</feature>
<feature type="splice variant" id="VSP_058196" description="In isoform 2.">
    <location>
        <begin position="1"/>
        <end position="109"/>
    </location>
</feature>
<feature type="sequence variant" id="VAR_030790" description="In dbSNP:rs752929794.">
    <original>A</original>
    <variation>T</variation>
    <location>
        <position position="239"/>
    </location>
</feature>
<feature type="sequence variant" id="VAR_054054" description="In dbSNP:rs12642536." evidence="6 11 15">
    <original>A</original>
    <variation>T</variation>
    <location>
        <position position="348"/>
    </location>
</feature>
<feature type="sequence variant" id="VAR_071865" description="In BC; results in reduced DSB repair efficiency; primarily localizes to the cytoplasm and has reduced nuclear localization; does not affect interaction with BRCA1; results in highly reduced interaction with UIMC1/RAP80; dbSNP:rs201627097." evidence="15 18">
    <original>R</original>
    <variation>Q</variation>
    <location>
        <position position="361"/>
    </location>
</feature>
<feature type="sequence variant" id="VAR_054055" description="In dbSNP:rs13125836." evidence="5 11 15">
    <original>D</original>
    <variation>N</variation>
    <location>
        <position position="373"/>
    </location>
</feature>
<feature type="mutagenesis site" description="No effect on formation of a heterotetramer with BRCA1." evidence="19">
    <original>F</original>
    <variation>D</variation>
    <location>
        <position position="400"/>
    </location>
</feature>
<feature type="mutagenesis site" description="Decreases formation of a heterotetramer with BRCA1." evidence="19">
    <original>E</original>
    <variation>R</variation>
    <location>
        <position position="402"/>
    </location>
</feature>
<feature type="mutagenesis site" description="No effect on formation of a heterotetramer with BRCA1." evidence="19">
    <original>Y</original>
    <variation>A</variation>
    <location>
        <position position="403"/>
    </location>
</feature>
<feature type="mutagenesis site" description="No effect on homodimerization. Mildly decreased recruitment of BRCA1 to sites of DNA damage." evidence="19">
    <original>S</original>
    <variation>A</variation>
    <location>
        <position position="404"/>
    </location>
</feature>
<feature type="mutagenesis site" description="Permits formation of a heterotetramer with BRCA1." evidence="19">
    <original>S</original>
    <variation>D</variation>
    <location>
        <position position="404"/>
    </location>
</feature>
<feature type="mutagenesis site" description="Abolishes formation of a heterotetramer with BRCA1. Does not affect interaction with a first BRCA1 chain." evidence="19">
    <original>S</original>
    <variation>P</variation>
    <location>
        <position position="404"/>
    </location>
</feature>
<feature type="mutagenesis site" description="Abolishes phosphorylation of the pSXXF motif and the interaction with BRCA1 but does not affect the interaction with UIMC1/RAP80. Strongly decreases recruitment of BRCA1 to sites of DNA damage. No effect on homodimerization." evidence="7 8 9 19">
    <original>S</original>
    <variation>A</variation>
    <location>
        <position position="406"/>
    </location>
</feature>
<reference key="1">
    <citation type="journal article" date="2007" name="Science">
        <title>Abraxas and RAP80 form a BRCA1 protein complex required for the DNA damage response.</title>
        <authorList>
            <person name="Wang B."/>
            <person name="Matsuoka S."/>
            <person name="Ballif B.A."/>
            <person name="Zhang D."/>
            <person name="Smogorzewska A."/>
            <person name="Giyi S."/>
            <person name="Elledge S.J."/>
        </authorList>
    </citation>
    <scope>NUCLEOTIDE SEQUENCE [MRNA] (ISOFORM 1)</scope>
    <scope>FUNCTION</scope>
    <scope>SUBCELLULAR LOCATION</scope>
    <scope>INTERACTION WITH BRCA1 AND UIMC1</scope>
    <scope>PHOSPHORYLATION AT SER-406</scope>
    <scope>MUTAGENESIS OF SER-406</scope>
</reference>
<reference key="2">
    <citation type="journal article" date="2003" name="Genome Res.">
        <title>The secreted protein discovery initiative (SPDI), a large-scale effort to identify novel human secreted and transmembrane proteins: a bioinformatics assessment.</title>
        <authorList>
            <person name="Clark H.F."/>
            <person name="Gurney A.L."/>
            <person name="Abaya E."/>
            <person name="Baker K."/>
            <person name="Baldwin D.T."/>
            <person name="Brush J."/>
            <person name="Chen J."/>
            <person name="Chow B."/>
            <person name="Chui C."/>
            <person name="Crowley C."/>
            <person name="Currell B."/>
            <person name="Deuel B."/>
            <person name="Dowd P."/>
            <person name="Eaton D."/>
            <person name="Foster J.S."/>
            <person name="Grimaldi C."/>
            <person name="Gu Q."/>
            <person name="Hass P.E."/>
            <person name="Heldens S."/>
            <person name="Huang A."/>
            <person name="Kim H.S."/>
            <person name="Klimowski L."/>
            <person name="Jin Y."/>
            <person name="Johnson S."/>
            <person name="Lee J."/>
            <person name="Lewis L."/>
            <person name="Liao D."/>
            <person name="Mark M.R."/>
            <person name="Robbie E."/>
            <person name="Sanchez C."/>
            <person name="Schoenfeld J."/>
            <person name="Seshagiri S."/>
            <person name="Simmons L."/>
            <person name="Singh J."/>
            <person name="Smith V."/>
            <person name="Stinson J."/>
            <person name="Vagts A."/>
            <person name="Vandlen R.L."/>
            <person name="Watanabe C."/>
            <person name="Wieand D."/>
            <person name="Woods K."/>
            <person name="Xie M.-H."/>
            <person name="Yansura D.G."/>
            <person name="Yi S."/>
            <person name="Yu G."/>
            <person name="Yuan J."/>
            <person name="Zhang M."/>
            <person name="Zhang Z."/>
            <person name="Goddard A.D."/>
            <person name="Wood W.I."/>
            <person name="Godowski P.J."/>
            <person name="Gray A.M."/>
        </authorList>
    </citation>
    <scope>NUCLEOTIDE SEQUENCE [LARGE SCALE MRNA] (ISOFORM 1)</scope>
    <scope>VARIANT ASN-373</scope>
</reference>
<reference key="3">
    <citation type="submission" date="2005-07" db="EMBL/GenBank/DDBJ databases">
        <authorList>
            <person name="Mural R.J."/>
            <person name="Istrail S."/>
            <person name="Sutton G.G."/>
            <person name="Florea L."/>
            <person name="Halpern A.L."/>
            <person name="Mobarry C.M."/>
            <person name="Lippert R."/>
            <person name="Walenz B."/>
            <person name="Shatkay H."/>
            <person name="Dew I."/>
            <person name="Miller J.R."/>
            <person name="Flanigan M.J."/>
            <person name="Edwards N.J."/>
            <person name="Bolanos R."/>
            <person name="Fasulo D."/>
            <person name="Halldorsson B.V."/>
            <person name="Hannenhalli S."/>
            <person name="Turner R."/>
            <person name="Yooseph S."/>
            <person name="Lu F."/>
            <person name="Nusskern D.R."/>
            <person name="Shue B.C."/>
            <person name="Zheng X.H."/>
            <person name="Zhong F."/>
            <person name="Delcher A.L."/>
            <person name="Huson D.H."/>
            <person name="Kravitz S.A."/>
            <person name="Mouchard L."/>
            <person name="Reinert K."/>
            <person name="Remington K.A."/>
            <person name="Clark A.G."/>
            <person name="Waterman M.S."/>
            <person name="Eichler E.E."/>
            <person name="Adams M.D."/>
            <person name="Hunkapiller M.W."/>
            <person name="Myers E.W."/>
            <person name="Venter J.C."/>
        </authorList>
    </citation>
    <scope>NUCLEOTIDE SEQUENCE [LARGE SCALE GENOMIC DNA]</scope>
</reference>
<reference key="4">
    <citation type="journal article" date="2004" name="Genome Res.">
        <title>The status, quality, and expansion of the NIH full-length cDNA project: the Mammalian Gene Collection (MGC).</title>
        <authorList>
            <consortium name="The MGC Project Team"/>
        </authorList>
    </citation>
    <scope>NUCLEOTIDE SEQUENCE [LARGE SCALE MRNA] (ISOFORM 1)</scope>
    <source>
        <tissue>Testis</tissue>
    </source>
</reference>
<reference key="5">
    <citation type="journal article" date="2004" name="Nat. Genet.">
        <title>Complete sequencing and characterization of 21,243 full-length human cDNAs.</title>
        <authorList>
            <person name="Ota T."/>
            <person name="Suzuki Y."/>
            <person name="Nishikawa T."/>
            <person name="Otsuki T."/>
            <person name="Sugiyama T."/>
            <person name="Irie R."/>
            <person name="Wakamatsu A."/>
            <person name="Hayashi K."/>
            <person name="Sato H."/>
            <person name="Nagai K."/>
            <person name="Kimura K."/>
            <person name="Makita H."/>
            <person name="Sekine M."/>
            <person name="Obayashi M."/>
            <person name="Nishi T."/>
            <person name="Shibahara T."/>
            <person name="Tanaka T."/>
            <person name="Ishii S."/>
            <person name="Yamamoto J."/>
            <person name="Saito K."/>
            <person name="Kawai Y."/>
            <person name="Isono Y."/>
            <person name="Nakamura Y."/>
            <person name="Nagahari K."/>
            <person name="Murakami K."/>
            <person name="Yasuda T."/>
            <person name="Iwayanagi T."/>
            <person name="Wagatsuma M."/>
            <person name="Shiratori A."/>
            <person name="Sudo H."/>
            <person name="Hosoiri T."/>
            <person name="Kaku Y."/>
            <person name="Kodaira H."/>
            <person name="Kondo H."/>
            <person name="Sugawara M."/>
            <person name="Takahashi M."/>
            <person name="Kanda K."/>
            <person name="Yokoi T."/>
            <person name="Furuya T."/>
            <person name="Kikkawa E."/>
            <person name="Omura Y."/>
            <person name="Abe K."/>
            <person name="Kamihara K."/>
            <person name="Katsuta N."/>
            <person name="Sato K."/>
            <person name="Tanikawa M."/>
            <person name="Yamazaki M."/>
            <person name="Ninomiya K."/>
            <person name="Ishibashi T."/>
            <person name="Yamashita H."/>
            <person name="Murakawa K."/>
            <person name="Fujimori K."/>
            <person name="Tanai H."/>
            <person name="Kimata M."/>
            <person name="Watanabe M."/>
            <person name="Hiraoka S."/>
            <person name="Chiba Y."/>
            <person name="Ishida S."/>
            <person name="Ono Y."/>
            <person name="Takiguchi S."/>
            <person name="Watanabe S."/>
            <person name="Yosida M."/>
            <person name="Hotuta T."/>
            <person name="Kusano J."/>
            <person name="Kanehori K."/>
            <person name="Takahashi-Fujii A."/>
            <person name="Hara H."/>
            <person name="Tanase T.-O."/>
            <person name="Nomura Y."/>
            <person name="Togiya S."/>
            <person name="Komai F."/>
            <person name="Hara R."/>
            <person name="Takeuchi K."/>
            <person name="Arita M."/>
            <person name="Imose N."/>
            <person name="Musashino K."/>
            <person name="Yuuki H."/>
            <person name="Oshima A."/>
            <person name="Sasaki N."/>
            <person name="Aotsuka S."/>
            <person name="Yoshikawa Y."/>
            <person name="Matsunawa H."/>
            <person name="Ichihara T."/>
            <person name="Shiohata N."/>
            <person name="Sano S."/>
            <person name="Moriya S."/>
            <person name="Momiyama H."/>
            <person name="Satoh N."/>
            <person name="Takami S."/>
            <person name="Terashima Y."/>
            <person name="Suzuki O."/>
            <person name="Nakagawa S."/>
            <person name="Senoh A."/>
            <person name="Mizoguchi H."/>
            <person name="Goto Y."/>
            <person name="Shimizu F."/>
            <person name="Wakebe H."/>
            <person name="Hishigaki H."/>
            <person name="Watanabe T."/>
            <person name="Sugiyama A."/>
            <person name="Takemoto M."/>
            <person name="Kawakami B."/>
            <person name="Yamazaki M."/>
            <person name="Watanabe K."/>
            <person name="Kumagai A."/>
            <person name="Itakura S."/>
            <person name="Fukuzumi Y."/>
            <person name="Fujimori Y."/>
            <person name="Komiyama M."/>
            <person name="Tashiro H."/>
            <person name="Tanigami A."/>
            <person name="Fujiwara T."/>
            <person name="Ono T."/>
            <person name="Yamada K."/>
            <person name="Fujii Y."/>
            <person name="Ozaki K."/>
            <person name="Hirao M."/>
            <person name="Ohmori Y."/>
            <person name="Kawabata A."/>
            <person name="Hikiji T."/>
            <person name="Kobatake N."/>
            <person name="Inagaki H."/>
            <person name="Ikema Y."/>
            <person name="Okamoto S."/>
            <person name="Okitani R."/>
            <person name="Kawakami T."/>
            <person name="Noguchi S."/>
            <person name="Itoh T."/>
            <person name="Shigeta K."/>
            <person name="Senba T."/>
            <person name="Matsumura K."/>
            <person name="Nakajima Y."/>
            <person name="Mizuno T."/>
            <person name="Morinaga M."/>
            <person name="Sasaki M."/>
            <person name="Togashi T."/>
            <person name="Oyama M."/>
            <person name="Hata H."/>
            <person name="Watanabe M."/>
            <person name="Komatsu T."/>
            <person name="Mizushima-Sugano J."/>
            <person name="Satoh T."/>
            <person name="Shirai Y."/>
            <person name="Takahashi Y."/>
            <person name="Nakagawa K."/>
            <person name="Okumura K."/>
            <person name="Nagase T."/>
            <person name="Nomura N."/>
            <person name="Kikuchi H."/>
            <person name="Masuho Y."/>
            <person name="Yamashita R."/>
            <person name="Nakai K."/>
            <person name="Yada T."/>
            <person name="Nakamura Y."/>
            <person name="Ohara O."/>
            <person name="Isogai T."/>
            <person name="Sugano S."/>
        </authorList>
    </citation>
    <scope>NUCLEOTIDE SEQUENCE [LARGE SCALE MRNA] (ISOFORM 2)</scope>
    <scope>VARIANT THR-348</scope>
    <source>
        <tissue>Placenta</tissue>
    </source>
</reference>
<reference key="6">
    <citation type="journal article" date="2007" name="Nat. Struct. Mol. Biol.">
        <title>CCDC98 targets BRCA1 to DNA damage sites.</title>
        <authorList>
            <person name="Liu Z."/>
            <person name="Wu J."/>
            <person name="Yu X."/>
        </authorList>
    </citation>
    <scope>FUNCTION</scope>
    <scope>SUBCELLULAR LOCATION</scope>
    <scope>INTERACTION WITH BRCA1 AND UIMC1</scope>
    <scope>PHOSPHORYLATION AT SER-406</scope>
    <scope>MUTAGENESIS OF SER-406</scope>
</reference>
<reference key="7">
    <citation type="journal article" date="2007" name="Nat. Struct. Mol. Biol.">
        <title>CCDC98 is a BRCA1-BRCT domain-binding protein involved in the DNA damage response.</title>
        <authorList>
            <person name="Kim H."/>
            <person name="Huang J."/>
            <person name="Chen J."/>
        </authorList>
    </citation>
    <scope>FUNCTION</scope>
    <scope>SUBCELLULAR LOCATION</scope>
    <scope>INTERACTION WITH BRCA1 AND UIMC1</scope>
    <scope>PHOSPHORYLATION AT SER-406</scope>
    <scope>MUTAGENESIS OF SER-406</scope>
</reference>
<reference key="8">
    <citation type="journal article" date="2007" name="Proc. Natl. Acad. Sci. U.S.A.">
        <title>Ubc13/Rnf8 ubiquitin ligases control foci formation of the Rap80/Abraxas/Brca1/Brcc36 complex in response to DNA damage.</title>
        <authorList>
            <person name="Wang B."/>
            <person name="Elledge S.J."/>
        </authorList>
    </citation>
    <scope>FUNCTION</scope>
</reference>
<reference key="9">
    <citation type="journal article" date="2008" name="Proc. Natl. Acad. Sci. U.S.A.">
        <title>A quantitative atlas of mitotic phosphorylation.</title>
        <authorList>
            <person name="Dephoure N."/>
            <person name="Zhou C."/>
            <person name="Villen J."/>
            <person name="Beausoleil S.A."/>
            <person name="Bakalarski C.E."/>
            <person name="Elledge S.J."/>
            <person name="Gygi S.P."/>
        </authorList>
    </citation>
    <scope>PHOSPHORYLATION [LARGE SCALE ANALYSIS] AT SER-386; SER-387; THR-390 AND SER-406</scope>
    <scope>IDENTIFICATION BY MASS SPECTROMETRY [LARGE SCALE ANALYSIS]</scope>
    <source>
        <tissue>Cervix carcinoma</tissue>
    </source>
</reference>
<reference key="10">
    <citation type="journal article" date="2009" name="Anal. Chem.">
        <title>Lys-N and trypsin cover complementary parts of the phosphoproteome in a refined SCX-based approach.</title>
        <authorList>
            <person name="Gauci S."/>
            <person name="Helbig A.O."/>
            <person name="Slijper M."/>
            <person name="Krijgsveld J."/>
            <person name="Heck A.J."/>
            <person name="Mohammed S."/>
        </authorList>
    </citation>
    <scope>IDENTIFICATION BY MASS SPECTROMETRY [LARGE SCALE ANALYSIS]</scope>
</reference>
<reference key="11">
    <citation type="journal article" date="2009" name="Genes Dev.">
        <title>MERIT40 controls BRCA1-Rap80 complex integrity and recruitment to DNA double-strand breaks.</title>
        <authorList>
            <person name="Shao G."/>
            <person name="Patterson-Fortin J."/>
            <person name="Messick T.E."/>
            <person name="Feng D."/>
            <person name="Shanbhag N."/>
            <person name="Wang Y."/>
            <person name="Greenberg R.A."/>
        </authorList>
    </citation>
    <scope>IDENTIFICATION IN THE BRCA1-A COMPLEX</scope>
</reference>
<reference key="12">
    <citation type="journal article" date="2009" name="Genes Dev.">
        <title>NBA1, a new player in the Brca1 A complex, is required for DNA damage resistance and checkpoint control.</title>
        <authorList>
            <person name="Wang B."/>
            <person name="Hurov K."/>
            <person name="Hofmann K."/>
            <person name="Elledge S.J."/>
        </authorList>
    </citation>
    <scope>IDENTIFICATION IN THE BRCA1-A COMPLEX</scope>
    <scope>DOMAIN MPN-LIKE</scope>
    <scope>INTERACTION WITH UIMC1; BRCC3; BABAM2; BABAM1 AND BRCA1</scope>
    <scope>UBIQUITIN-BINDING</scope>
</reference>
<reference key="13">
    <citation type="journal article" date="2009" name="Genes Dev.">
        <title>MERIT40 facilitates BRCA1 localization and DNA damage repair.</title>
        <authorList>
            <person name="Feng L."/>
            <person name="Huang J."/>
            <person name="Chen J."/>
        </authorList>
    </citation>
    <scope>FUNCTION</scope>
    <scope>IDENTIFICATION IN THE BRCA1-A COMPLEX</scope>
    <scope>INTERACTION WITH UIMC1; BRCC3; BABAM2 AND BRCA1</scope>
</reference>
<reference key="14">
    <citation type="journal article" date="2009" name="Sci. Signal.">
        <title>Quantitative phosphoproteomic analysis of T cell receptor signaling reveals system-wide modulation of protein-protein interactions.</title>
        <authorList>
            <person name="Mayya V."/>
            <person name="Lundgren D.H."/>
            <person name="Hwang S.-I."/>
            <person name="Rezaul K."/>
            <person name="Wu L."/>
            <person name="Eng J.K."/>
            <person name="Rodionov V."/>
            <person name="Han D.K."/>
        </authorList>
    </citation>
    <scope>PHOSPHORYLATION [LARGE SCALE ANALYSIS] AT THR-390 AND SER-406</scope>
    <scope>IDENTIFICATION BY MASS SPECTROMETRY [LARGE SCALE ANALYSIS]</scope>
    <source>
        <tissue>Leukemic T-cell</tissue>
    </source>
</reference>
<reference key="15">
    <citation type="journal article" date="2010" name="Sci. Signal.">
        <title>Quantitative phosphoproteomics reveals widespread full phosphorylation site occupancy during mitosis.</title>
        <authorList>
            <person name="Olsen J.V."/>
            <person name="Vermeulen M."/>
            <person name="Santamaria A."/>
            <person name="Kumar C."/>
            <person name="Miller M.L."/>
            <person name="Jensen L.J."/>
            <person name="Gnad F."/>
            <person name="Cox J."/>
            <person name="Jensen T.S."/>
            <person name="Nigg E.A."/>
            <person name="Brunak S."/>
            <person name="Mann M."/>
        </authorList>
    </citation>
    <scope>PHOSPHORYLATION [LARGE SCALE ANALYSIS] AT SER-386; SER-387; THR-390 AND SER-406</scope>
    <scope>IDENTIFICATION BY MASS SPECTROMETRY [LARGE SCALE ANALYSIS]</scope>
    <source>
        <tissue>Cervix carcinoma</tissue>
    </source>
</reference>
<reference key="16">
    <citation type="journal article" date="2011" name="Sci. Signal.">
        <title>System-wide temporal characterization of the proteome and phosphoproteome of human embryonic stem cell differentiation.</title>
        <authorList>
            <person name="Rigbolt K.T."/>
            <person name="Prokhorova T.A."/>
            <person name="Akimov V."/>
            <person name="Henningsen J."/>
            <person name="Johansen P.T."/>
            <person name="Kratchmarova I."/>
            <person name="Kassem M."/>
            <person name="Mann M."/>
            <person name="Olsen J.V."/>
            <person name="Blagoev B."/>
        </authorList>
    </citation>
    <scope>PHOSPHORYLATION [LARGE SCALE ANALYSIS] AT SER-386; SER-387 AND THR-390</scope>
    <scope>IDENTIFICATION BY MASS SPECTROMETRY [LARGE SCALE ANALYSIS]</scope>
</reference>
<reference key="17">
    <citation type="journal article" date="2013" name="Cell Rep.">
        <title>A BRISC-SHMT complex deubiquitinates IFNAR1 and regulates interferon responses.</title>
        <authorList>
            <person name="Zheng H."/>
            <person name="Gupta V."/>
            <person name="Patterson-Fortin J."/>
            <person name="Bhattacharya S."/>
            <person name="Katlinski K."/>
            <person name="Wu J."/>
            <person name="Varghese B."/>
            <person name="Carbone C.J."/>
            <person name="Aressy B."/>
            <person name="Fuchs S.Y."/>
            <person name="Greenberg R.A."/>
        </authorList>
    </citation>
    <scope>IDENTIFICATION IN THE ARISC COMPLEX</scope>
    <scope>IDENTIFICATION BY MASS SPECTROMETRY</scope>
</reference>
<reference key="18">
    <citation type="journal article" date="2013" name="J. Proteome Res.">
        <title>Toward a comprehensive characterization of a human cancer cell phosphoproteome.</title>
        <authorList>
            <person name="Zhou H."/>
            <person name="Di Palma S."/>
            <person name="Preisinger C."/>
            <person name="Peng M."/>
            <person name="Polat A.N."/>
            <person name="Heck A.J."/>
            <person name="Mohammed S."/>
        </authorList>
    </citation>
    <scope>PHOSPHORYLATION [LARGE SCALE ANALYSIS] AT THR-390 AND SER-406</scope>
    <scope>IDENTIFICATION BY MASS SPECTROMETRY [LARGE SCALE ANALYSIS]</scope>
    <source>
        <tissue>Cervix carcinoma</tissue>
        <tissue>Erythroleukemia</tissue>
    </source>
</reference>
<reference key="19">
    <citation type="journal article" date="2013" name="Acta Crystallogr. F">
        <title>Preliminary crystallographic studies of BRCA1 BRCT-ABRAXAS complex.</title>
        <authorList>
            <person name="Badgujar D.C."/>
            <person name="Sawant U."/>
            <person name="Vikrant X."/>
            <person name="Yadav L."/>
            <person name="Hosur M.V."/>
            <person name="Varma A.K."/>
        </authorList>
    </citation>
    <scope>X-RAY CRYSTALLOGRAPHY (3.50 ANGSTROMS) OF 399-409 IN COMPLEX WITH BRCA1</scope>
    <scope>INTERACTION WITH BRCA1</scope>
</reference>
<reference key="20">
    <citation type="journal article" date="2016" name="Mol. Cell">
        <title>Structure of BRCA1-BRCT/Abraxas complex reveals phosphorylation-dependent BRCT dimerization at DNA damage sites.</title>
        <authorList>
            <person name="Wu Q."/>
            <person name="Paul A."/>
            <person name="Su D."/>
            <person name="Mehmood S."/>
            <person name="Foo T.K."/>
            <person name="Ochi T."/>
            <person name="Bunting E.L."/>
            <person name="Xia B."/>
            <person name="Robinson C.V."/>
            <person name="Wang B."/>
            <person name="Blundell T.L."/>
        </authorList>
    </citation>
    <scope>X-RAY CRYSTALLOGRAPHY (2.50 ANGSTROMS) OF 403-409 IN COMPLEX WITH BRCA1</scope>
    <scope>INTERACTION WITH BRCA1</scope>
    <scope>SUBUNIT</scope>
    <scope>FUNCTION</scope>
    <scope>PHOSPHORYLATION AT SER-404 AND SER-406</scope>
    <scope>MUTAGENESIS OF PHE-400; GLU-402; TYR-403; SER-404 AND SER-406</scope>
</reference>
<reference key="21">
    <citation type="journal article" date="2009" name="Breast Cancer Res. Treat.">
        <title>Analysis of the genes coding for the BRCA1-interacting proteins, RAP80 and Abraxas (CCDC98), in high-risk, non-BRCA1/2, multiethnic breast cancer cases.</title>
        <authorList>
            <person name="Novak D.J."/>
            <person name="Sabbaghian N."/>
            <person name="Maillet P."/>
            <person name="Chappuis P.O."/>
            <person name="Foulkes W.D."/>
            <person name="Tischkowitz M."/>
        </authorList>
    </citation>
    <scope>VARIANTS THR-348 AND ASN-373</scope>
</reference>
<reference key="22">
    <citation type="journal article" date="2012" name="Sci. Transl. Med.">
        <title>Breast cancer-associated Abraxas mutation disrupts nuclear localization and DNA damage response functions.</title>
        <authorList>
            <person name="Solyom S."/>
            <person name="Aressy B."/>
            <person name="Pylkas K."/>
            <person name="Patterson-Fortin J."/>
            <person name="Hartikainen J.M."/>
            <person name="Kallioniemi A."/>
            <person name="Kauppila S."/>
            <person name="Nikkila J."/>
            <person name="Kosma V.M."/>
            <person name="Mannermaa A."/>
            <person name="Greenberg R.A."/>
            <person name="Winqvist R."/>
        </authorList>
    </citation>
    <scope>FUNCTION</scope>
    <scope>VARIANTS THR-348 AND ASN-373</scope>
    <scope>VARIANT BC GLN-361</scope>
    <scope>CHARACTERIZATION OF VARIANT BC GLN-361</scope>
</reference>
<reference key="23">
    <citation type="journal article" date="2015" name="J. Biomol. Struct. Dyn.">
        <title>Mislocalization of BRCA1-complex due to ABRAXAS Arg361Gln mutation.</title>
        <authorList>
            <person name="Kumar R.V."/>
            <person name="Siddiqui Q."/>
            <person name="Singh N."/>
            <person name="Waghmare S.K."/>
            <person name="Varma A.K."/>
        </authorList>
    </citation>
    <scope>CHARACTERIZATION OF VARIANT BC GLN-361</scope>
</reference>
<evidence type="ECO:0000250" key="1">
    <source>
        <dbReference type="UniProtKB" id="Q8BPZ8"/>
    </source>
</evidence>
<evidence type="ECO:0000255" key="2"/>
<evidence type="ECO:0000255" key="3">
    <source>
        <dbReference type="PROSITE-ProRule" id="PRU01182"/>
    </source>
</evidence>
<evidence type="ECO:0000256" key="4">
    <source>
        <dbReference type="SAM" id="MobiDB-lite"/>
    </source>
</evidence>
<evidence type="ECO:0000269" key="5">
    <source>
    </source>
</evidence>
<evidence type="ECO:0000269" key="6">
    <source>
    </source>
</evidence>
<evidence type="ECO:0000269" key="7">
    <source>
    </source>
</evidence>
<evidence type="ECO:0000269" key="8">
    <source>
    </source>
</evidence>
<evidence type="ECO:0000269" key="9">
    <source>
    </source>
</evidence>
<evidence type="ECO:0000269" key="10">
    <source>
    </source>
</evidence>
<evidence type="ECO:0000269" key="11">
    <source>
    </source>
</evidence>
<evidence type="ECO:0000269" key="12">
    <source>
    </source>
</evidence>
<evidence type="ECO:0000269" key="13">
    <source>
    </source>
</evidence>
<evidence type="ECO:0000269" key="14">
    <source>
    </source>
</evidence>
<evidence type="ECO:0000269" key="15">
    <source>
    </source>
</evidence>
<evidence type="ECO:0000269" key="16">
    <source>
    </source>
</evidence>
<evidence type="ECO:0000269" key="17">
    <source>
    </source>
</evidence>
<evidence type="ECO:0000269" key="18">
    <source>
    </source>
</evidence>
<evidence type="ECO:0000269" key="19">
    <source>
    </source>
</evidence>
<evidence type="ECO:0000305" key="20"/>
<evidence type="ECO:0000312" key="21">
    <source>
        <dbReference type="HGNC" id="HGNC:25829"/>
    </source>
</evidence>
<evidence type="ECO:0007744" key="22">
    <source>
    </source>
</evidence>
<evidence type="ECO:0007744" key="23">
    <source>
    </source>
</evidence>
<evidence type="ECO:0007744" key="24">
    <source>
    </source>
</evidence>
<evidence type="ECO:0007744" key="25">
    <source>
    </source>
</evidence>
<evidence type="ECO:0007744" key="26">
    <source>
    </source>
</evidence>
<name>ABRX1_HUMAN</name>
<protein>
    <recommendedName>
        <fullName evidence="21">BRCA1-A complex subunit Abraxas 1</fullName>
    </recommendedName>
    <alternativeName>
        <fullName>Coiled-coil domain-containing protein 98</fullName>
    </alternativeName>
    <alternativeName>
        <fullName>Protein FAM175A</fullName>
    </alternativeName>
</protein>
<accession>Q6UWZ7</accession>
<accession>A5JJ07</accession>
<accession>Q9H8I1</accession>
<accession>Q9H9N4</accession>
<sequence>MEGESTSAVLSGFVLGALAFQHLNTDSDTEGFLLGEVKGEAKNSITDSQMDDVEVVYTIDIQKYIPCYQLFSFYNSSGEVNEQALKKILSNVKKNVVGWYKFRRHSDQIMTFRERLLHKNLQEHFSNQDLVFLLLTPSIITESCSTHRLEHSLYKPQKGLFHRVPLVVANLGMSEQLGYKTVSGSCMSTGFSRAVQTHSSKFFEEDGSLKEVHKINEMYASLQEELKSICKKVEDSEQAVDKLVKDVNRLKREIEKRRGAQIQAAREKNIQKDPQENIFLCQALRTFFPNSEFLHSCVMSLKNRHVSKSSCNYNHHLDVVDNLTLMVEHTDIPEASPASTPQIIKHKALDLDDRWQFKRSRLLDTQDKRSKADTGSSNQDKASKMSSPETDEEIEKMKGFGEYSRSPTF</sequence>
<organism>
    <name type="scientific">Homo sapiens</name>
    <name type="common">Human</name>
    <dbReference type="NCBI Taxonomy" id="9606"/>
    <lineage>
        <taxon>Eukaryota</taxon>
        <taxon>Metazoa</taxon>
        <taxon>Chordata</taxon>
        <taxon>Craniata</taxon>
        <taxon>Vertebrata</taxon>
        <taxon>Euteleostomi</taxon>
        <taxon>Mammalia</taxon>
        <taxon>Eutheria</taxon>
        <taxon>Euarchontoglires</taxon>
        <taxon>Primates</taxon>
        <taxon>Haplorrhini</taxon>
        <taxon>Catarrhini</taxon>
        <taxon>Hominidae</taxon>
        <taxon>Homo</taxon>
    </lineage>
</organism>
<gene>
    <name evidence="21" type="primary">ABRAXAS1</name>
    <name evidence="21" type="synonym">ABRA1</name>
    <name type="synonym">CCDC98</name>
    <name evidence="21" type="synonym">FAM175A</name>
    <name type="ORF">UNQ496/PRO1013</name>
</gene>
<proteinExistence type="evidence at protein level"/>